<protein>
    <recommendedName>
        <fullName>Biogenesis of lysosome-related organelles complex 1 subunit BLS1</fullName>
        <shortName>BLOC-1 subunit BLS1</shortName>
    </recommendedName>
    <alternativeName>
        <fullName>BLOS1-homolog</fullName>
    </alternativeName>
</protein>
<evidence type="ECO:0000250" key="1"/>
<evidence type="ECO:0000250" key="2">
    <source>
        <dbReference type="UniProtKB" id="Q06071"/>
    </source>
</evidence>
<evidence type="ECO:0000305" key="3"/>
<gene>
    <name type="primary">BLS1</name>
    <name type="ORF">EC1118_1L7_2883g</name>
</gene>
<accession>C8ZE17</accession>
<name>BL1S1_YEAS8</name>
<feature type="chain" id="PRO_0000410635" description="Biogenesis of lysosome-related organelles complex 1 subunit BLS1">
    <location>
        <begin position="1"/>
        <end position="122"/>
    </location>
</feature>
<feature type="modified residue" description="Phosphoserine" evidence="2">
    <location>
        <position position="33"/>
    </location>
</feature>
<comment type="function">
    <text evidence="1">Component of the biogenesis of lysosome-related organelles complex-1 (BLOC-1), a complex involved in endosomal cargo sorting.</text>
</comment>
<comment type="subunit">
    <text evidence="1">Component of the biogenesis of lysosome-related organelles complex-1 (BLOC-1) composed of at least BLI1, BLS1, CNL1, KXD1, SNN1 and VAB2.</text>
</comment>
<comment type="subcellular location">
    <subcellularLocation>
        <location evidence="1">Endosome</location>
    </subcellularLocation>
</comment>
<comment type="similarity">
    <text evidence="3">Belongs to the BLOC1S1 family.</text>
</comment>
<reference key="1">
    <citation type="journal article" date="2009" name="Proc. Natl. Acad. Sci. U.S.A.">
        <title>Eukaryote-to-eukaryote gene transfer events revealed by the genome sequence of the wine yeast Saccharomyces cerevisiae EC1118.</title>
        <authorList>
            <person name="Novo M."/>
            <person name="Bigey F."/>
            <person name="Beyne E."/>
            <person name="Galeote V."/>
            <person name="Gavory F."/>
            <person name="Mallet S."/>
            <person name="Cambon B."/>
            <person name="Legras J.-L."/>
            <person name="Wincker P."/>
            <person name="Casaregola S."/>
            <person name="Dequin S."/>
        </authorList>
    </citation>
    <scope>NUCLEOTIDE SEQUENCE [LARGE SCALE GENOMIC DNA]</scope>
    <source>
        <strain>Lalvin EC1118 / Prise de mousse</strain>
    </source>
</reference>
<sequence>MFLTFSMCVNWIIVKMPNRSEELDRLLDKIINSPHRTEASKTLQEIENNQSYILNVQLKKLLRLHDDSFKNKCVSPINYMLEKYTPYMGHTEALQKEAELVDRDLRILEMTYQLIEKNRNSK</sequence>
<organism>
    <name type="scientific">Saccharomyces cerevisiae (strain Lalvin EC1118 / Prise de mousse)</name>
    <name type="common">Baker's yeast</name>
    <dbReference type="NCBI Taxonomy" id="643680"/>
    <lineage>
        <taxon>Eukaryota</taxon>
        <taxon>Fungi</taxon>
        <taxon>Dikarya</taxon>
        <taxon>Ascomycota</taxon>
        <taxon>Saccharomycotina</taxon>
        <taxon>Saccharomycetes</taxon>
        <taxon>Saccharomycetales</taxon>
        <taxon>Saccharomycetaceae</taxon>
        <taxon>Saccharomyces</taxon>
    </lineage>
</organism>
<dbReference type="EMBL" id="FN393080">
    <property type="protein sequence ID" value="CAY81633.1"/>
    <property type="molecule type" value="Genomic_DNA"/>
</dbReference>
<dbReference type="SMR" id="C8ZE17"/>
<dbReference type="HOGENOM" id="CLU_150164_0_0_1"/>
<dbReference type="OrthoDB" id="40475at4893"/>
<dbReference type="Proteomes" id="UP000000286">
    <property type="component" value="Chromosome XII, Scaffold EC1118_1L7"/>
</dbReference>
<dbReference type="GO" id="GO:0005768">
    <property type="term" value="C:endosome"/>
    <property type="evidence" value="ECO:0007669"/>
    <property type="project" value="UniProtKB-SubCell"/>
</dbReference>
<proteinExistence type="inferred from homology"/>
<keyword id="KW-0967">Endosome</keyword>
<keyword id="KW-0597">Phosphoprotein</keyword>
<keyword id="KW-0813">Transport</keyword>